<protein>
    <recommendedName>
        <fullName evidence="1">NADH-quinone oxidoreductase subunit I</fullName>
        <ecNumber evidence="1">7.1.1.-</ecNumber>
    </recommendedName>
    <alternativeName>
        <fullName evidence="1">NADH dehydrogenase I subunit I</fullName>
    </alternativeName>
    <alternativeName>
        <fullName evidence="1">NDH-1 subunit I</fullName>
    </alternativeName>
</protein>
<name>NUOI_WOLPM</name>
<dbReference type="EC" id="7.1.1.-" evidence="1"/>
<dbReference type="EMBL" id="AE017196">
    <property type="protein sequence ID" value="AAS14642.1"/>
    <property type="molecule type" value="Genomic_DNA"/>
</dbReference>
<dbReference type="SMR" id="Q73GH4"/>
<dbReference type="EnsemblBacteria" id="AAS14642">
    <property type="protein sequence ID" value="AAS14642"/>
    <property type="gene ID" value="WD_0980"/>
</dbReference>
<dbReference type="KEGG" id="wol:WD_0980"/>
<dbReference type="eggNOG" id="COG1143">
    <property type="taxonomic scope" value="Bacteria"/>
</dbReference>
<dbReference type="Proteomes" id="UP000008215">
    <property type="component" value="Chromosome"/>
</dbReference>
<dbReference type="GO" id="GO:0005886">
    <property type="term" value="C:plasma membrane"/>
    <property type="evidence" value="ECO:0007669"/>
    <property type="project" value="UniProtKB-SubCell"/>
</dbReference>
<dbReference type="GO" id="GO:0051539">
    <property type="term" value="F:4 iron, 4 sulfur cluster binding"/>
    <property type="evidence" value="ECO:0007669"/>
    <property type="project" value="UniProtKB-KW"/>
</dbReference>
<dbReference type="GO" id="GO:0005506">
    <property type="term" value="F:iron ion binding"/>
    <property type="evidence" value="ECO:0007669"/>
    <property type="project" value="UniProtKB-UniRule"/>
</dbReference>
<dbReference type="GO" id="GO:0050136">
    <property type="term" value="F:NADH:ubiquinone reductase (non-electrogenic) activity"/>
    <property type="evidence" value="ECO:0007669"/>
    <property type="project" value="UniProtKB-UniRule"/>
</dbReference>
<dbReference type="GO" id="GO:0048038">
    <property type="term" value="F:quinone binding"/>
    <property type="evidence" value="ECO:0007669"/>
    <property type="project" value="UniProtKB-KW"/>
</dbReference>
<dbReference type="GO" id="GO:0009060">
    <property type="term" value="P:aerobic respiration"/>
    <property type="evidence" value="ECO:0007669"/>
    <property type="project" value="TreeGrafter"/>
</dbReference>
<dbReference type="FunFam" id="3.30.70.3270:FF:000001">
    <property type="entry name" value="NADH-quinone oxidoreductase subunit I 1"/>
    <property type="match status" value="1"/>
</dbReference>
<dbReference type="Gene3D" id="3.30.70.3270">
    <property type="match status" value="1"/>
</dbReference>
<dbReference type="HAMAP" id="MF_01351">
    <property type="entry name" value="NDH1_NuoI"/>
    <property type="match status" value="1"/>
</dbReference>
<dbReference type="InterPro" id="IPR017896">
    <property type="entry name" value="4Fe4S_Fe-S-bd"/>
</dbReference>
<dbReference type="InterPro" id="IPR017900">
    <property type="entry name" value="4Fe4S_Fe_S_CS"/>
</dbReference>
<dbReference type="InterPro" id="IPR010226">
    <property type="entry name" value="NADH_quinone_OxRdtase_chainI"/>
</dbReference>
<dbReference type="NCBIfam" id="TIGR01971">
    <property type="entry name" value="NuoI"/>
    <property type="match status" value="1"/>
</dbReference>
<dbReference type="NCBIfam" id="NF004538">
    <property type="entry name" value="PRK05888.1-4"/>
    <property type="match status" value="1"/>
</dbReference>
<dbReference type="NCBIfam" id="NF004539">
    <property type="entry name" value="PRK05888.1-5"/>
    <property type="match status" value="1"/>
</dbReference>
<dbReference type="PANTHER" id="PTHR10849:SF20">
    <property type="entry name" value="NADH DEHYDROGENASE [UBIQUINONE] IRON-SULFUR PROTEIN 8, MITOCHONDRIAL"/>
    <property type="match status" value="1"/>
</dbReference>
<dbReference type="PANTHER" id="PTHR10849">
    <property type="entry name" value="NADH DEHYDROGENASE UBIQUINONE IRON-SULFUR PROTEIN 8, MITOCHONDRIAL"/>
    <property type="match status" value="1"/>
</dbReference>
<dbReference type="Pfam" id="PF12838">
    <property type="entry name" value="Fer4_7"/>
    <property type="match status" value="1"/>
</dbReference>
<dbReference type="SUPFAM" id="SSF54862">
    <property type="entry name" value="4Fe-4S ferredoxins"/>
    <property type="match status" value="1"/>
</dbReference>
<dbReference type="PROSITE" id="PS00198">
    <property type="entry name" value="4FE4S_FER_1"/>
    <property type="match status" value="2"/>
</dbReference>
<dbReference type="PROSITE" id="PS51379">
    <property type="entry name" value="4FE4S_FER_2"/>
    <property type="match status" value="2"/>
</dbReference>
<comment type="function">
    <text evidence="1">NDH-1 shuttles electrons from NADH, via FMN and iron-sulfur (Fe-S) centers, to quinones in the respiratory chain. The immediate electron acceptor for the enzyme in this species is believed to be ubiquinone. Couples the redox reaction to proton translocation (for every two electrons transferred, four hydrogen ions are translocated across the cytoplasmic membrane), and thus conserves the redox energy in a proton gradient.</text>
</comment>
<comment type="catalytic activity">
    <reaction evidence="1">
        <text>a quinone + NADH + 5 H(+)(in) = a quinol + NAD(+) + 4 H(+)(out)</text>
        <dbReference type="Rhea" id="RHEA:57888"/>
        <dbReference type="ChEBI" id="CHEBI:15378"/>
        <dbReference type="ChEBI" id="CHEBI:24646"/>
        <dbReference type="ChEBI" id="CHEBI:57540"/>
        <dbReference type="ChEBI" id="CHEBI:57945"/>
        <dbReference type="ChEBI" id="CHEBI:132124"/>
    </reaction>
</comment>
<comment type="cofactor">
    <cofactor evidence="1">
        <name>[4Fe-4S] cluster</name>
        <dbReference type="ChEBI" id="CHEBI:49883"/>
    </cofactor>
    <text evidence="1">Binds 2 [4Fe-4S] clusters per subunit.</text>
</comment>
<comment type="subunit">
    <text evidence="1">NDH-1 is composed of 14 different subunits. Subunits NuoA, H, J, K, L, M, N constitute the membrane sector of the complex.</text>
</comment>
<comment type="subcellular location">
    <subcellularLocation>
        <location evidence="1">Cell membrane</location>
        <topology evidence="1">Peripheral membrane protein</topology>
    </subcellularLocation>
</comment>
<comment type="similarity">
    <text evidence="1">Belongs to the complex I 23 kDa subunit family.</text>
</comment>
<sequence length="169" mass="19978">MTDTSFKYFMLKKLAWYWSFVELIKGFVITLKYMFKPKVTLRYPMEKGPLSPRFRGEHALRRYPNGEERCIACKLCEVICPAQAIVIEAEEREDGSRRTTRYDIDMIKCIYCGLCQEACPVDAIVEGPNFEFATETREELMYNKEKLLRNGEVWEDAIALRLKKNRPYY</sequence>
<organism>
    <name type="scientific">Wolbachia pipientis wMel</name>
    <dbReference type="NCBI Taxonomy" id="163164"/>
    <lineage>
        <taxon>Bacteria</taxon>
        <taxon>Pseudomonadati</taxon>
        <taxon>Pseudomonadota</taxon>
        <taxon>Alphaproteobacteria</taxon>
        <taxon>Rickettsiales</taxon>
        <taxon>Anaplasmataceae</taxon>
        <taxon>Wolbachieae</taxon>
        <taxon>Wolbachia</taxon>
    </lineage>
</organism>
<proteinExistence type="inferred from homology"/>
<evidence type="ECO:0000255" key="1">
    <source>
        <dbReference type="HAMAP-Rule" id="MF_01351"/>
    </source>
</evidence>
<reference key="1">
    <citation type="journal article" date="2004" name="PLoS Biol.">
        <title>Phylogenomics of the reproductive parasite Wolbachia pipientis wMel: a streamlined genome overrun by mobile genetic elements.</title>
        <authorList>
            <person name="Wu M."/>
            <person name="Sun L.V."/>
            <person name="Vamathevan J.J."/>
            <person name="Riegler M."/>
            <person name="DeBoy R.T."/>
            <person name="Brownlie J.C."/>
            <person name="McGraw E.A."/>
            <person name="Martin W."/>
            <person name="Esser C."/>
            <person name="Ahmadinejad N."/>
            <person name="Wiegand C."/>
            <person name="Madupu R."/>
            <person name="Beanan M.J."/>
            <person name="Brinkac L.M."/>
            <person name="Daugherty S.C."/>
            <person name="Durkin A.S."/>
            <person name="Kolonay J.F."/>
            <person name="Nelson W.C."/>
            <person name="Mohamoud Y."/>
            <person name="Lee P."/>
            <person name="Berry K.J."/>
            <person name="Young M.B."/>
            <person name="Utterback T.R."/>
            <person name="Weidman J.F."/>
            <person name="Nierman W.C."/>
            <person name="Paulsen I.T."/>
            <person name="Nelson K.E."/>
            <person name="Tettelin H."/>
            <person name="O'Neill S.L."/>
            <person name="Eisen J.A."/>
        </authorList>
    </citation>
    <scope>NUCLEOTIDE SEQUENCE [LARGE SCALE GENOMIC DNA]</scope>
</reference>
<keyword id="KW-0004">4Fe-4S</keyword>
<keyword id="KW-1003">Cell membrane</keyword>
<keyword id="KW-0408">Iron</keyword>
<keyword id="KW-0411">Iron-sulfur</keyword>
<keyword id="KW-0472">Membrane</keyword>
<keyword id="KW-0479">Metal-binding</keyword>
<keyword id="KW-0520">NAD</keyword>
<keyword id="KW-0874">Quinone</keyword>
<keyword id="KW-0677">Repeat</keyword>
<keyword id="KW-1278">Translocase</keyword>
<keyword id="KW-0830">Ubiquinone</keyword>
<accession>Q73GH4</accession>
<gene>
    <name evidence="1" type="primary">nuoI</name>
    <name type="ordered locus">WD_0980</name>
</gene>
<feature type="chain" id="PRO_0000245757" description="NADH-quinone oxidoreductase subunit I">
    <location>
        <begin position="1"/>
        <end position="169"/>
    </location>
</feature>
<feature type="domain" description="4Fe-4S ferredoxin-type 1" evidence="1">
    <location>
        <begin position="60"/>
        <end position="90"/>
    </location>
</feature>
<feature type="domain" description="4Fe-4S ferredoxin-type 2" evidence="1">
    <location>
        <begin position="100"/>
        <end position="129"/>
    </location>
</feature>
<feature type="binding site" evidence="1">
    <location>
        <position position="70"/>
    </location>
    <ligand>
        <name>[4Fe-4S] cluster</name>
        <dbReference type="ChEBI" id="CHEBI:49883"/>
        <label>1</label>
    </ligand>
</feature>
<feature type="binding site" evidence="1">
    <location>
        <position position="73"/>
    </location>
    <ligand>
        <name>[4Fe-4S] cluster</name>
        <dbReference type="ChEBI" id="CHEBI:49883"/>
        <label>1</label>
    </ligand>
</feature>
<feature type="binding site" evidence="1">
    <location>
        <position position="76"/>
    </location>
    <ligand>
        <name>[4Fe-4S] cluster</name>
        <dbReference type="ChEBI" id="CHEBI:49883"/>
        <label>1</label>
    </ligand>
</feature>
<feature type="binding site" evidence="1">
    <location>
        <position position="80"/>
    </location>
    <ligand>
        <name>[4Fe-4S] cluster</name>
        <dbReference type="ChEBI" id="CHEBI:49883"/>
        <label>2</label>
    </ligand>
</feature>
<feature type="binding site" evidence="1">
    <location>
        <position position="109"/>
    </location>
    <ligand>
        <name>[4Fe-4S] cluster</name>
        <dbReference type="ChEBI" id="CHEBI:49883"/>
        <label>2</label>
    </ligand>
</feature>
<feature type="binding site" evidence="1">
    <location>
        <position position="112"/>
    </location>
    <ligand>
        <name>[4Fe-4S] cluster</name>
        <dbReference type="ChEBI" id="CHEBI:49883"/>
        <label>2</label>
    </ligand>
</feature>
<feature type="binding site" evidence="1">
    <location>
        <position position="115"/>
    </location>
    <ligand>
        <name>[4Fe-4S] cluster</name>
        <dbReference type="ChEBI" id="CHEBI:49883"/>
        <label>2</label>
    </ligand>
</feature>
<feature type="binding site" evidence="1">
    <location>
        <position position="119"/>
    </location>
    <ligand>
        <name>[4Fe-4S] cluster</name>
        <dbReference type="ChEBI" id="CHEBI:49883"/>
        <label>1</label>
    </ligand>
</feature>